<reference key="1">
    <citation type="journal article" date="2007" name="PLoS Genet.">
        <title>The complete genome sequence of Yersinia pseudotuberculosis IP31758, the causative agent of Far East scarlet-like fever.</title>
        <authorList>
            <person name="Eppinger M."/>
            <person name="Rosovitz M.J."/>
            <person name="Fricke W.F."/>
            <person name="Rasko D.A."/>
            <person name="Kokorina G."/>
            <person name="Fayolle C."/>
            <person name="Lindler L.E."/>
            <person name="Carniel E."/>
            <person name="Ravel J."/>
        </authorList>
    </citation>
    <scope>NUCLEOTIDE SEQUENCE [LARGE SCALE GENOMIC DNA]</scope>
    <source>
        <strain>IP 31758</strain>
    </source>
</reference>
<protein>
    <recommendedName>
        <fullName evidence="1">UPF0266 membrane protein YpsIP31758_2371</fullName>
    </recommendedName>
</protein>
<accession>A7FJB2</accession>
<comment type="subcellular location">
    <subcellularLocation>
        <location evidence="1">Cell inner membrane</location>
        <topology evidence="1">Multi-pass membrane protein</topology>
    </subcellularLocation>
</comment>
<comment type="similarity">
    <text evidence="1">Belongs to the UPF0266 family.</text>
</comment>
<gene>
    <name type="ordered locus">YpsIP31758_2371</name>
</gene>
<name>Y2371_YERP3</name>
<proteinExistence type="inferred from homology"/>
<keyword id="KW-0997">Cell inner membrane</keyword>
<keyword id="KW-1003">Cell membrane</keyword>
<keyword id="KW-0472">Membrane</keyword>
<keyword id="KW-0812">Transmembrane</keyword>
<keyword id="KW-1133">Transmembrane helix</keyword>
<dbReference type="EMBL" id="CP000720">
    <property type="protein sequence ID" value="ABS48585.1"/>
    <property type="molecule type" value="Genomic_DNA"/>
</dbReference>
<dbReference type="RefSeq" id="WP_002211066.1">
    <property type="nucleotide sequence ID" value="NC_009708.1"/>
</dbReference>
<dbReference type="KEGG" id="ypi:YpsIP31758_2371"/>
<dbReference type="HOGENOM" id="CLU_133645_0_0_6"/>
<dbReference type="Proteomes" id="UP000002412">
    <property type="component" value="Chromosome"/>
</dbReference>
<dbReference type="GO" id="GO:0005886">
    <property type="term" value="C:plasma membrane"/>
    <property type="evidence" value="ECO:0007669"/>
    <property type="project" value="UniProtKB-SubCell"/>
</dbReference>
<dbReference type="HAMAP" id="MF_01071">
    <property type="entry name" value="UPF0266"/>
    <property type="match status" value="1"/>
</dbReference>
<dbReference type="InterPro" id="IPR009328">
    <property type="entry name" value="DUF986"/>
</dbReference>
<dbReference type="NCBIfam" id="NF002791">
    <property type="entry name" value="PRK02913.1"/>
    <property type="match status" value="1"/>
</dbReference>
<dbReference type="Pfam" id="PF06173">
    <property type="entry name" value="DUF986"/>
    <property type="match status" value="1"/>
</dbReference>
<dbReference type="PIRSF" id="PIRSF020687">
    <property type="entry name" value="UCP020687"/>
    <property type="match status" value="1"/>
</dbReference>
<sequence>MSVTDLVLVVFIALLLIYAIYDEFIMNMMKGKTRLQVHLKRKNKLDCMIFVGLIGILIYNNVMAHGAPLTTYLLVGLALVAVYISYIRWPKLLFKNTGFFYANTFIEYSRIKSMNLSEDGILVIDLEQRRLLIQVKKLDDLEKIYNFFIENQS</sequence>
<organism>
    <name type="scientific">Yersinia pseudotuberculosis serotype O:1b (strain IP 31758)</name>
    <dbReference type="NCBI Taxonomy" id="349747"/>
    <lineage>
        <taxon>Bacteria</taxon>
        <taxon>Pseudomonadati</taxon>
        <taxon>Pseudomonadota</taxon>
        <taxon>Gammaproteobacteria</taxon>
        <taxon>Enterobacterales</taxon>
        <taxon>Yersiniaceae</taxon>
        <taxon>Yersinia</taxon>
    </lineage>
</organism>
<evidence type="ECO:0000255" key="1">
    <source>
        <dbReference type="HAMAP-Rule" id="MF_01071"/>
    </source>
</evidence>
<feature type="chain" id="PRO_1000064596" description="UPF0266 membrane protein YpsIP31758_2371">
    <location>
        <begin position="1"/>
        <end position="153"/>
    </location>
</feature>
<feature type="transmembrane region" description="Helical" evidence="1">
    <location>
        <begin position="6"/>
        <end position="26"/>
    </location>
</feature>
<feature type="transmembrane region" description="Helical" evidence="1">
    <location>
        <begin position="45"/>
        <end position="65"/>
    </location>
</feature>
<feature type="transmembrane region" description="Helical" evidence="1">
    <location>
        <begin position="67"/>
        <end position="87"/>
    </location>
</feature>